<protein>
    <recommendedName>
        <fullName evidence="8">RAF-like serine/threonine-protein kinase PRAF</fullName>
        <ecNumber evidence="3">2.7.11.1</ecNumber>
    </recommendedName>
    <alternativeName>
        <fullName evidence="8">Protein PHOTOSYNTHESIS-RELATED RAF</fullName>
        <shortName evidence="8">MpPRAF</shortName>
    </alternativeName>
</protein>
<dbReference type="EC" id="2.7.11.1" evidence="3"/>
<dbReference type="EMBL" id="LC505674">
    <property type="protein sequence ID" value="BBO36689.1"/>
    <property type="molecule type" value="mRNA"/>
</dbReference>
<dbReference type="EMBL" id="KZ772685">
    <property type="protein sequence ID" value="PTQ45948.1"/>
    <property type="molecule type" value="Genomic_DNA"/>
</dbReference>
<dbReference type="SMR" id="A0A2R6XIK6"/>
<dbReference type="EnsemblPlants" id="Mp8g06400.1">
    <property type="protein sequence ID" value="Mp8g06400.1.cds"/>
    <property type="gene ID" value="Mp8g06400"/>
</dbReference>
<dbReference type="Gramene" id="Mp8g06400.1">
    <property type="protein sequence ID" value="Mp8g06400.1.cds"/>
    <property type="gene ID" value="Mp8g06400"/>
</dbReference>
<dbReference type="OMA" id="DAHQDSY"/>
<dbReference type="OrthoDB" id="4062651at2759"/>
<dbReference type="Proteomes" id="UP000244005">
    <property type="component" value="Unassembled WGS sequence"/>
</dbReference>
<dbReference type="GO" id="GO:0005737">
    <property type="term" value="C:cytoplasm"/>
    <property type="evidence" value="ECO:0000314"/>
    <property type="project" value="UniProtKB"/>
</dbReference>
<dbReference type="GO" id="GO:0005524">
    <property type="term" value="F:ATP binding"/>
    <property type="evidence" value="ECO:0007669"/>
    <property type="project" value="UniProtKB-KW"/>
</dbReference>
<dbReference type="GO" id="GO:0004672">
    <property type="term" value="F:protein kinase activity"/>
    <property type="evidence" value="ECO:0000318"/>
    <property type="project" value="GO_Central"/>
</dbReference>
<dbReference type="GO" id="GO:0004674">
    <property type="term" value="F:protein serine/threonine kinase activity"/>
    <property type="evidence" value="ECO:0007669"/>
    <property type="project" value="UniProtKB-KW"/>
</dbReference>
<dbReference type="GO" id="GO:0009734">
    <property type="term" value="P:auxin-activated signaling pathway"/>
    <property type="evidence" value="ECO:0007669"/>
    <property type="project" value="UniProtKB-KW"/>
</dbReference>
<dbReference type="GO" id="GO:0071365">
    <property type="term" value="P:cellular response to auxin stimulus"/>
    <property type="evidence" value="ECO:0000314"/>
    <property type="project" value="UniProtKB"/>
</dbReference>
<dbReference type="GO" id="GO:0010928">
    <property type="term" value="P:regulation of auxin mediated signaling pathway"/>
    <property type="evidence" value="ECO:0000315"/>
    <property type="project" value="UniProtKB"/>
</dbReference>
<dbReference type="GO" id="GO:0010109">
    <property type="term" value="P:regulation of photosynthesis"/>
    <property type="evidence" value="ECO:0000315"/>
    <property type="project" value="UniProtKB"/>
</dbReference>
<dbReference type="GO" id="GO:0009646">
    <property type="term" value="P:response to absence of light"/>
    <property type="evidence" value="ECO:0000314"/>
    <property type="project" value="UniProtKB"/>
</dbReference>
<dbReference type="GO" id="GO:0009733">
    <property type="term" value="P:response to auxin"/>
    <property type="evidence" value="ECO:0000315"/>
    <property type="project" value="UniProtKB"/>
</dbReference>
<dbReference type="GO" id="GO:0009637">
    <property type="term" value="P:response to blue light"/>
    <property type="evidence" value="ECO:0000314"/>
    <property type="project" value="UniProtKB"/>
</dbReference>
<dbReference type="GO" id="GO:0010114">
    <property type="term" value="P:response to red light"/>
    <property type="evidence" value="ECO:0000314"/>
    <property type="project" value="UniProtKB"/>
</dbReference>
<dbReference type="GO" id="GO:0007165">
    <property type="term" value="P:signal transduction"/>
    <property type="evidence" value="ECO:0000315"/>
    <property type="project" value="UniProtKB"/>
</dbReference>
<dbReference type="GO" id="GO:0005985">
    <property type="term" value="P:sucrose metabolic process"/>
    <property type="evidence" value="ECO:0000315"/>
    <property type="project" value="UniProtKB"/>
</dbReference>
<dbReference type="CDD" id="cd06410">
    <property type="entry name" value="PB1_UP2"/>
    <property type="match status" value="1"/>
</dbReference>
<dbReference type="CDD" id="cd13999">
    <property type="entry name" value="STKc_MAP3K-like"/>
    <property type="match status" value="1"/>
</dbReference>
<dbReference type="FunFam" id="1.10.510.10:FF:000142">
    <property type="entry name" value="Octicosapeptide/phox/Bem1p domain kinase superfamily protein"/>
    <property type="match status" value="1"/>
</dbReference>
<dbReference type="FunFam" id="3.10.20.90:FF:000058">
    <property type="entry name" value="Octicosapeptide/phox/Bem1p domain kinase superfamily protein"/>
    <property type="match status" value="1"/>
</dbReference>
<dbReference type="FunFam" id="3.30.200.20:FF:000081">
    <property type="entry name" value="Octicosapeptide/phox/Bem1p domain kinase superfamily protein"/>
    <property type="match status" value="1"/>
</dbReference>
<dbReference type="Gene3D" id="3.10.20.90">
    <property type="entry name" value="Phosphatidylinositol 3-kinase Catalytic Subunit, Chain A, domain 1"/>
    <property type="match status" value="1"/>
</dbReference>
<dbReference type="Gene3D" id="3.30.200.20">
    <property type="entry name" value="Phosphorylase Kinase, domain 1"/>
    <property type="match status" value="1"/>
</dbReference>
<dbReference type="Gene3D" id="1.10.510.10">
    <property type="entry name" value="Transferase(Phosphotransferase) domain 1"/>
    <property type="match status" value="1"/>
</dbReference>
<dbReference type="InterPro" id="IPR011009">
    <property type="entry name" value="Kinase-like_dom_sf"/>
</dbReference>
<dbReference type="InterPro" id="IPR053793">
    <property type="entry name" value="PB1-like"/>
</dbReference>
<dbReference type="InterPro" id="IPR000270">
    <property type="entry name" value="PB1_dom"/>
</dbReference>
<dbReference type="InterPro" id="IPR000719">
    <property type="entry name" value="Prot_kinase_dom"/>
</dbReference>
<dbReference type="InterPro" id="IPR017441">
    <property type="entry name" value="Protein_kinase_ATP_BS"/>
</dbReference>
<dbReference type="InterPro" id="IPR001245">
    <property type="entry name" value="Ser-Thr/Tyr_kinase_cat_dom"/>
</dbReference>
<dbReference type="InterPro" id="IPR008271">
    <property type="entry name" value="Ser/Thr_kinase_AS"/>
</dbReference>
<dbReference type="InterPro" id="IPR050167">
    <property type="entry name" value="Ser_Thr_protein_kinase"/>
</dbReference>
<dbReference type="PANTHER" id="PTHR23257:SF963">
    <property type="entry name" value="AT08303P"/>
    <property type="match status" value="1"/>
</dbReference>
<dbReference type="PANTHER" id="PTHR23257">
    <property type="entry name" value="SERINE-THREONINE PROTEIN KINASE"/>
    <property type="match status" value="1"/>
</dbReference>
<dbReference type="Pfam" id="PF00564">
    <property type="entry name" value="PB1"/>
    <property type="match status" value="1"/>
</dbReference>
<dbReference type="Pfam" id="PF07714">
    <property type="entry name" value="PK_Tyr_Ser-Thr"/>
    <property type="match status" value="1"/>
</dbReference>
<dbReference type="PRINTS" id="PR00109">
    <property type="entry name" value="TYRKINASE"/>
</dbReference>
<dbReference type="SMART" id="SM00666">
    <property type="entry name" value="PB1"/>
    <property type="match status" value="1"/>
</dbReference>
<dbReference type="SMART" id="SM00220">
    <property type="entry name" value="S_TKc"/>
    <property type="match status" value="1"/>
</dbReference>
<dbReference type="SUPFAM" id="SSF54277">
    <property type="entry name" value="CAD &amp; PB1 domains"/>
    <property type="match status" value="1"/>
</dbReference>
<dbReference type="SUPFAM" id="SSF56112">
    <property type="entry name" value="Protein kinase-like (PK-like)"/>
    <property type="match status" value="1"/>
</dbReference>
<dbReference type="PROSITE" id="PS51745">
    <property type="entry name" value="PB1"/>
    <property type="match status" value="1"/>
</dbReference>
<dbReference type="PROSITE" id="PS00107">
    <property type="entry name" value="PROTEIN_KINASE_ATP"/>
    <property type="match status" value="1"/>
</dbReference>
<dbReference type="PROSITE" id="PS50011">
    <property type="entry name" value="PROTEIN_KINASE_DOM"/>
    <property type="match status" value="1"/>
</dbReference>
<dbReference type="PROSITE" id="PS00108">
    <property type="entry name" value="PROTEIN_KINASE_ST"/>
    <property type="match status" value="1"/>
</dbReference>
<comment type="function">
    <text evidence="6 7">RAF-like protein kinase acting as a central mediator of a fast response pathway to auxin involving proteins phosphorylation, and leading to rapid cellular responses including membrane depolarization and cytoplasmic streaming (PubMed:38128538). Required for general growth and developmental process (PubMed:31851335, PubMed:38128538). Photosynthesis signaling kinase involved in the regulation of the sucrose metabolism involving PGM1 (PubMed:31851335). Necessary for optimal chloroplast electron transport rate (ETR) (PubMed:31851335).</text>
</comment>
<comment type="catalytic activity">
    <reaction evidence="3">
        <text>L-seryl-[protein] + ATP = O-phospho-L-seryl-[protein] + ADP + H(+)</text>
        <dbReference type="Rhea" id="RHEA:17989"/>
        <dbReference type="Rhea" id="RHEA-COMP:9863"/>
        <dbReference type="Rhea" id="RHEA-COMP:11604"/>
        <dbReference type="ChEBI" id="CHEBI:15378"/>
        <dbReference type="ChEBI" id="CHEBI:29999"/>
        <dbReference type="ChEBI" id="CHEBI:30616"/>
        <dbReference type="ChEBI" id="CHEBI:83421"/>
        <dbReference type="ChEBI" id="CHEBI:456216"/>
        <dbReference type="EC" id="2.7.11.1"/>
    </reaction>
</comment>
<comment type="catalytic activity">
    <reaction evidence="3">
        <text>L-threonyl-[protein] + ATP = O-phospho-L-threonyl-[protein] + ADP + H(+)</text>
        <dbReference type="Rhea" id="RHEA:46608"/>
        <dbReference type="Rhea" id="RHEA-COMP:11060"/>
        <dbReference type="Rhea" id="RHEA-COMP:11605"/>
        <dbReference type="ChEBI" id="CHEBI:15378"/>
        <dbReference type="ChEBI" id="CHEBI:30013"/>
        <dbReference type="ChEBI" id="CHEBI:30616"/>
        <dbReference type="ChEBI" id="CHEBI:61977"/>
        <dbReference type="ChEBI" id="CHEBI:456216"/>
        <dbReference type="EC" id="2.7.11.1"/>
    </reaction>
</comment>
<comment type="activity regulation">
    <text evidence="6 7">Activated by auxin via rapid phosphorylation (PubMed:38128538). Regulated by photosynthesis-activity-dependent changes in its phosphorylation status (PubMed:31851335).</text>
</comment>
<comment type="subcellular location">
    <subcellularLocation>
        <location evidence="7">Cytoplasm</location>
    </subcellularLocation>
    <text evidence="7">Broadly distributed to both membrane-associated and intracellular punctate structures.</text>
</comment>
<comment type="PTM">
    <text evidence="6 7">Hyperphosphorylated in response to auxin (PubMed:38128538). Its phosphorylation state is also rapidly stimulated by photosynthetic activity (e.g. in response to blue light and red light irradiation); dephosphorylated in the darkness (PubMed:31851335).</text>
</comment>
<comment type="disruption phenotype">
    <text evidence="6 7">Growth retardation with hyper-accumulation of starch and reduction of sucrose levels probably due to an impaired synthesis of sucrose and the repression of its catabolism; starch accumulation, but not slow growth phenotype, is suppressed in plants lacking also PGM1 (PubMed:31851335). Down-regulated photosynthetic electron transport as a result of the compromised photosynthate metabolism; this phenotype is enhanced in the double mutant missing both PRAF and PPGM1 (PubMed:31851335). Plants lacking PRAF exhibit growth and developmental phenotypes such as smaller thallus size and reduced gemmae cup number (PubMed:38128538). Reduced thallus sensitivity to auxin-mediated growth inhibition associated with a drastic reduction of auxin-triggered hyperphosphorylated proteins, but no obvious defect in auxin-induced genes transcription (PubMed:38128538). Insensitivity to the promoting effect of auxin on cytoplasmic streaming in rhizoid cells (PubMed:38128538).</text>
</comment>
<comment type="similarity">
    <text evidence="1">Belongs to the protein kinase superfamily. Ser/Thr protein kinase family.</text>
</comment>
<name>PRAF_MARPO</name>
<organism>
    <name type="scientific">Marchantia polymorpha</name>
    <name type="common">Common liverwort</name>
    <name type="synonym">Marchantia aquatica</name>
    <dbReference type="NCBI Taxonomy" id="3197"/>
    <lineage>
        <taxon>Eukaryota</taxon>
        <taxon>Viridiplantae</taxon>
        <taxon>Streptophyta</taxon>
        <taxon>Embryophyta</taxon>
        <taxon>Marchantiophyta</taxon>
        <taxon>Marchantiopsida</taxon>
        <taxon>Marchantiidae</taxon>
        <taxon>Marchantiales</taxon>
        <taxon>Marchantiaceae</taxon>
        <taxon>Marchantia</taxon>
    </lineage>
</organism>
<keyword id="KW-0067">ATP-binding</keyword>
<keyword id="KW-0927">Auxin signaling pathway</keyword>
<keyword id="KW-0963">Cytoplasm</keyword>
<keyword id="KW-0418">Kinase</keyword>
<keyword id="KW-0547">Nucleotide-binding</keyword>
<keyword id="KW-0597">Phosphoprotein</keyword>
<keyword id="KW-1185">Reference proteome</keyword>
<keyword id="KW-0723">Serine/threonine-protein kinase</keyword>
<keyword id="KW-0808">Transferase</keyword>
<feature type="chain" id="PRO_0000460323" description="RAF-like serine/threonine-protein kinase PRAF">
    <location>
        <begin position="1"/>
        <end position="1680"/>
    </location>
</feature>
<feature type="domain" description="PB1" evidence="2">
    <location>
        <begin position="166"/>
        <end position="267"/>
    </location>
</feature>
<feature type="domain" description="Protein kinase" evidence="1">
    <location>
        <begin position="1389"/>
        <end position="1655"/>
    </location>
</feature>
<feature type="region of interest" description="Disordered" evidence="5">
    <location>
        <begin position="86"/>
        <end position="163"/>
    </location>
</feature>
<feature type="region of interest" description="Disordered" evidence="5">
    <location>
        <begin position="363"/>
        <end position="388"/>
    </location>
</feature>
<feature type="region of interest" description="Disordered" evidence="5">
    <location>
        <begin position="417"/>
        <end position="516"/>
    </location>
</feature>
<feature type="region of interest" description="Disordered" evidence="5">
    <location>
        <begin position="556"/>
        <end position="580"/>
    </location>
</feature>
<feature type="region of interest" description="Disordered" evidence="5">
    <location>
        <begin position="594"/>
        <end position="613"/>
    </location>
</feature>
<feature type="region of interest" description="Disordered" evidence="5">
    <location>
        <begin position="641"/>
        <end position="672"/>
    </location>
</feature>
<feature type="region of interest" description="Disordered" evidence="5">
    <location>
        <begin position="700"/>
        <end position="725"/>
    </location>
</feature>
<feature type="region of interest" description="Disordered" evidence="5">
    <location>
        <begin position="1186"/>
        <end position="1226"/>
    </location>
</feature>
<feature type="region of interest" description="Disordered" evidence="5">
    <location>
        <begin position="1339"/>
        <end position="1372"/>
    </location>
</feature>
<feature type="region of interest" description="Disordered" evidence="5">
    <location>
        <begin position="1661"/>
        <end position="1680"/>
    </location>
</feature>
<feature type="compositionally biased region" description="Low complexity" evidence="5">
    <location>
        <begin position="366"/>
        <end position="388"/>
    </location>
</feature>
<feature type="compositionally biased region" description="Basic and acidic residues" evidence="5">
    <location>
        <begin position="446"/>
        <end position="482"/>
    </location>
</feature>
<feature type="compositionally biased region" description="Low complexity" evidence="5">
    <location>
        <begin position="560"/>
        <end position="580"/>
    </location>
</feature>
<feature type="compositionally biased region" description="Low complexity" evidence="5">
    <location>
        <begin position="603"/>
        <end position="613"/>
    </location>
</feature>
<feature type="compositionally biased region" description="Polar residues" evidence="5">
    <location>
        <begin position="641"/>
        <end position="651"/>
    </location>
</feature>
<feature type="compositionally biased region" description="Low complexity" evidence="5">
    <location>
        <begin position="1204"/>
        <end position="1217"/>
    </location>
</feature>
<feature type="compositionally biased region" description="Basic and acidic residues" evidence="5">
    <location>
        <begin position="1339"/>
        <end position="1354"/>
    </location>
</feature>
<feature type="active site" description="Proton acceptor" evidence="1 3">
    <location>
        <position position="1518"/>
    </location>
</feature>
<feature type="binding site" evidence="1">
    <location>
        <begin position="1395"/>
        <end position="1403"/>
    </location>
    <ligand>
        <name>ATP</name>
        <dbReference type="ChEBI" id="CHEBI:30616"/>
    </ligand>
</feature>
<feature type="binding site" evidence="1 4">
    <location>
        <position position="1416"/>
    </location>
    <ligand>
        <name>ATP</name>
        <dbReference type="ChEBI" id="CHEBI:30616"/>
    </ligand>
</feature>
<feature type="modified residue" description="Phosphoserine" evidence="6 7">
    <location>
        <position position="1248"/>
    </location>
</feature>
<feature type="modified residue" description="Phosphoserine" evidence="7">
    <location>
        <position position="1365"/>
    </location>
</feature>
<feature type="mutagenesis site" description="Ability to correct slow growth and starch accumulation defects in plants lacking PRAF; when associated with A-1246." evidence="6">
    <original>S</original>
    <variation>A</variation>
    <location>
        <position position="1246"/>
    </location>
</feature>
<feature type="mutagenesis site" description="Ability to correct slow growth and starch accumulation defects in plants lacking PRAF; when associated with A-1248." evidence="6">
    <original>S</original>
    <variation>A</variation>
    <location>
        <position position="1248"/>
    </location>
</feature>
<feature type="mutagenesis site" description="Kinase-dead mutation leading to growth retardation with hyper-accumulation of starch and lost photosynthesis-induced phosphorylation." evidence="6">
    <original>D</original>
    <variation>N</variation>
    <location>
        <position position="1540"/>
    </location>
</feature>
<accession>A0A2R6XIK6</accession>
<gene>
    <name evidence="8" type="primary">PRAF</name>
    <name evidence="8" type="ordered locus">Mapoly0013s0150</name>
    <name evidence="9" type="ordered locus">MARPO_0013s0150</name>
</gene>
<reference key="1">
    <citation type="journal article" date="2020" name="Plant Cell Physiol.">
        <title>Regulation of photosynthetic carbohydrate metabolism by a Raf-like kinase in the liverwort Marchantia polymorpha.</title>
        <authorList>
            <person name="Koide E."/>
            <person name="Suetsugu N."/>
            <person name="Iwano M."/>
            <person name="Gotoh E."/>
            <person name="Nomura Y."/>
            <person name="Stolze S.C."/>
            <person name="Nakagami H."/>
            <person name="Kohchi T."/>
            <person name="Nishihama R."/>
        </authorList>
    </citation>
    <scope>NUCLEOTIDE SEQUENCE [MRNA]</scope>
    <scope>FUNCTION</scope>
    <scope>DISRUPTION PHENOTYPE</scope>
    <scope>MUTAGENESIS OF SER-1246; SER-1248 AND ASP-1540</scope>
    <scope>ACTIVITY REGULATION</scope>
    <scope>PTM</scope>
    <scope>PHOSPHORYLATION AT SER-1248</scope>
    <source>
        <strain>Tak-1</strain>
    </source>
</reference>
<reference key="2">
    <citation type="journal article" date="2017" name="Cell">
        <title>Insights into land plant evolution garnered from the Marchantia polymorpha genome.</title>
        <authorList>
            <person name="Bowman J.L."/>
            <person name="Kohchi T."/>
            <person name="Yamato K.T."/>
            <person name="Jenkins J."/>
            <person name="Shu S."/>
            <person name="Ishizaki K."/>
            <person name="Yamaoka S."/>
            <person name="Nishihama R."/>
            <person name="Nakamura Y."/>
            <person name="Berger F."/>
            <person name="Adam C."/>
            <person name="Aki S.S."/>
            <person name="Althoff F."/>
            <person name="Araki T."/>
            <person name="Arteaga-Vazquez M.A."/>
            <person name="Balasubrmanian S."/>
            <person name="Barry K."/>
            <person name="Bauer D."/>
            <person name="Boehm C.R."/>
            <person name="Briginshaw L."/>
            <person name="Caballero-Perez J."/>
            <person name="Catarino B."/>
            <person name="Chen F."/>
            <person name="Chiyoda S."/>
            <person name="Chovatia M."/>
            <person name="Davies K.M."/>
            <person name="Delmans M."/>
            <person name="Demura T."/>
            <person name="Dierschke T."/>
            <person name="Dolan L."/>
            <person name="Dorantes-Acosta A.E."/>
            <person name="Eklund D.M."/>
            <person name="Florent S.N."/>
            <person name="Flores-Sandoval E."/>
            <person name="Fujiyama A."/>
            <person name="Fukuzawa H."/>
            <person name="Galik B."/>
            <person name="Grimanelli D."/>
            <person name="Grimwood J."/>
            <person name="Grossniklaus U."/>
            <person name="Hamada T."/>
            <person name="Haseloff J."/>
            <person name="Hetherington A.J."/>
            <person name="Higo A."/>
            <person name="Hirakawa Y."/>
            <person name="Hundley H.N."/>
            <person name="Ikeda Y."/>
            <person name="Inoue K."/>
            <person name="Inoue S.I."/>
            <person name="Ishida S."/>
            <person name="Jia Q."/>
            <person name="Kakita M."/>
            <person name="Kanazawa T."/>
            <person name="Kawai Y."/>
            <person name="Kawashima T."/>
            <person name="Kennedy M."/>
            <person name="Kinose K."/>
            <person name="Kinoshita T."/>
            <person name="Kohara Y."/>
            <person name="Koide E."/>
            <person name="Komatsu K."/>
            <person name="Kopischke S."/>
            <person name="Kubo M."/>
            <person name="Kyozuka J."/>
            <person name="Lagercrantz U."/>
            <person name="Lin S.S."/>
            <person name="Lindquist E."/>
            <person name="Lipzen A.M."/>
            <person name="Lu C.W."/>
            <person name="De Luna E."/>
            <person name="Martienssen R.A."/>
            <person name="Minamino N."/>
            <person name="Mizutani M."/>
            <person name="Mizutani M."/>
            <person name="Mochizuki N."/>
            <person name="Monte I."/>
            <person name="Mosher R."/>
            <person name="Nagasaki H."/>
            <person name="Nakagami H."/>
            <person name="Naramoto S."/>
            <person name="Nishitani K."/>
            <person name="Ohtani M."/>
            <person name="Okamoto T."/>
            <person name="Okumura M."/>
            <person name="Phillips J."/>
            <person name="Pollak B."/>
            <person name="Reinders A."/>
            <person name="Rovekamp M."/>
            <person name="Sano R."/>
            <person name="Sawa S."/>
            <person name="Schmid M.W."/>
            <person name="Shirakawa M."/>
            <person name="Solano R."/>
            <person name="Spunde A."/>
            <person name="Suetsugu N."/>
            <person name="Sugano S."/>
            <person name="Sugiyama A."/>
            <person name="Sun R."/>
            <person name="Suzuki Y."/>
            <person name="Takenaka M."/>
            <person name="Takezawa D."/>
            <person name="Tomogane H."/>
            <person name="Tsuzuki M."/>
            <person name="Ueda T."/>
            <person name="Umeda M."/>
            <person name="Ward J.M."/>
            <person name="Watanabe Y."/>
            <person name="Yazaki K."/>
            <person name="Yokoyama R."/>
            <person name="Yoshitake Y."/>
            <person name="Yotsui I."/>
            <person name="Zachgo S."/>
            <person name="Schmutz J."/>
        </authorList>
    </citation>
    <scope>NUCLEOTIDE SEQUENCE [LARGE SCALE GENOMIC DNA]</scope>
    <source>
        <strain>Tak-1</strain>
    </source>
</reference>
<reference key="3">
    <citation type="journal article" date="2024" name="Cell">
        <title>RAF-like protein kinases mediate a deeply conserved, rapid auxin response.</title>
        <authorList>
            <person name="Kuhn A."/>
            <person name="Roosjen M."/>
            <person name="Mutte S."/>
            <person name="Dubey S.M."/>
            <person name="Carrillo Carrasco V.P."/>
            <person name="Boeren S."/>
            <person name="Monzer A."/>
            <person name="Koehorst J."/>
            <person name="Kohchi T."/>
            <person name="Nishihama R."/>
            <person name="Fendrych M."/>
            <person name="Sprakel J."/>
            <person name="Friml J."/>
            <person name="Weijers D."/>
        </authorList>
    </citation>
    <scope>FUNCTION</scope>
    <scope>DISRUPTION PHENOTYPE</scope>
    <scope>ACTIVITY REGULATION</scope>
    <scope>INDUCTION BY AUXIN</scope>
    <scope>PHOSPHORYLATION AT SER-1248 AND SER-1365</scope>
    <scope>SUBCELLULAR LOCATION</scope>
    <source>
        <strain>Tak-1</strain>
    </source>
</reference>
<proteinExistence type="evidence at protein level"/>
<sequence>MVVREAMIVPQTVQGGGKGVNGCSLVSNYQNSRDLCLQSAAMEQKSKGVIENCNLGPHDVGVGWKRNSSEGSISSMDSLPCGETVFSPSDPHNSVFRKPRRLGVSESDDESVIDQSQEESLLRKSKRSVMGGTVQPHSAMAQSVDEAAPDHSSTPSDDGKDFPSSRVKFMCSFGGKILPRPSDQQLRYVGGQTRIIGINRDVNFSELRNKMRESFGQCYTFKYQLPDEDLDALVTVSSDEDLENMMEEYDKLEADGSSRLRVFLFPADQDATSFDIDSTGDLRNSEQRYVDAVNGIAESSTRRISDGVLGASPVSSDLLGLELSEPSWGLARGPDAVPMAMLATHHDPNLIHQVPVAHPVSALTGNLSNRSNAPSAPSSAPSSPPLLARNLHGKLPLVGELHQFQYLQDSQFKGVGPQYTGMPSEVAHQDSESYGGSGGSSAASQHEMHYRSTDSRRGPESPPKKFHDALHQDHPITVEQRRLSGTKMPRIGSHGKLTRLSEHSELAPSSRVDSQQMPDIHMAPGELQRLFPQQVPLQQTLWPHAMDTQQDSYRRPDMLQSSGAQPAVSGQQQQGYQPQQQLQHLFRSGLSQTGANHEGAYRQGDQQQQSQQFQEDLHVNPNYIPRSVSSHAIAAGIAAGQSTSYHGSAPSSPRPGFRELPSRHLPGGPQLQHQWTFNGAGYVDQGFGRRVMNYPDQATRSFRLSSSPPRYRDHHPHSEERLHRQAQQVSEPLHHEQVPVSGQLKFETNSVSQAQYDLVPRPQVPQYKGHNPFQEKITSFQDHQEVGDIRRHVLQQGKDNQLLAGQQHLHSILQPQRIDYQESLKQQGDQSIPIHPRFQDGQEKVAEWMVQERALEEEEARKRVLGRIRQAELEEEAAAEAVVSQHKDTHQGVYAGLHLPNDEDLLTSSLGDYPSGNRRNERLESSISNAFPFRHLPPSVLGGYTAPKSRVNPTETSHVAQYVSRPVDTDYLAVAGLRGGGNGQDMRSAALFEVNGLQQTSGYQMPSGPHRLMEERLMPSAFNPITQLQKLRINDNLALNNDMRWSGSEDVRNEPSIPARDRMGGIYEDHHQGLPGLTLGRSAGKLSRPSSNTSIPNLLDETIGEGSLLPSGPSYGTQAQGTNLIDITQSISAIDNPLYSTSYASRLSNTSLGLDSPLVTSGGMLNSSLEGTSFSDYYKIKMGDDLPNAKMPSSKIPSAEDNLSRSSSSSLSELSKSGSEDGLGGQLTMDQRTVDMVVAALDLDRSGSVVQSVLESSDAKEASLSESVHDHSLGKLGSVVGSVGTQSVWPLDSAPTLAAGLWEKKLDEAGMTEETFERHITSDGTTFEELTADDHEVLASTVDKENQEEVRTGLDEPADEDKANSTGLGSDPAAKAIARGLQTIKNADLEELRELGSGTFGTVYHGKWRGTDVAIKRIKASCFAGRPSEQERLIEDFWREACNLGHLHHPNVVAFYGVVADGPGGTLATVTEYMVNGSLKQVLQKKDRTIDRRKRLLIAMDAAFGMEYLHGKNIVHFDLKCENLLVNMRDPHRPICKVGDLGLSKVKHQTMVSGGVRGTLPWMAPELLNGNSSLVTEKVDVFSFGIVMWELLTGEEPYDKMHYGAIIGGIVNNTLRPLIPSWCDPAWRSLMERCWANEPAVRPSFSDIAKELRTMAAALQPKTQAQTQGQSHPHPQMQIV</sequence>
<evidence type="ECO:0000255" key="1">
    <source>
        <dbReference type="PROSITE-ProRule" id="PRU00159"/>
    </source>
</evidence>
<evidence type="ECO:0000255" key="2">
    <source>
        <dbReference type="PROSITE-ProRule" id="PRU01081"/>
    </source>
</evidence>
<evidence type="ECO:0000255" key="3">
    <source>
        <dbReference type="PROSITE-ProRule" id="PRU10027"/>
    </source>
</evidence>
<evidence type="ECO:0000255" key="4">
    <source>
        <dbReference type="PROSITE-ProRule" id="PRU10141"/>
    </source>
</evidence>
<evidence type="ECO:0000256" key="5">
    <source>
        <dbReference type="SAM" id="MobiDB-lite"/>
    </source>
</evidence>
<evidence type="ECO:0000269" key="6">
    <source>
    </source>
</evidence>
<evidence type="ECO:0000269" key="7">
    <source>
    </source>
</evidence>
<evidence type="ECO:0000303" key="8">
    <source>
    </source>
</evidence>
<evidence type="ECO:0000312" key="9">
    <source>
        <dbReference type="EMBL" id="PTQ45948.1"/>
    </source>
</evidence>